<gene>
    <name evidence="1" type="primary">lplA</name>
    <name type="ordered locus">VC_1388</name>
</gene>
<feature type="chain" id="PRO_0000209572" description="Lipoate-protein ligase A">
    <location>
        <begin position="1"/>
        <end position="338"/>
    </location>
</feature>
<feature type="domain" description="BPL/LPL catalytic" evidence="2">
    <location>
        <begin position="29"/>
        <end position="216"/>
    </location>
</feature>
<feature type="binding site" evidence="1">
    <location>
        <position position="71"/>
    </location>
    <ligand>
        <name>ATP</name>
        <dbReference type="ChEBI" id="CHEBI:30616"/>
    </ligand>
</feature>
<feature type="binding site" evidence="1">
    <location>
        <begin position="76"/>
        <end position="79"/>
    </location>
    <ligand>
        <name>ATP</name>
        <dbReference type="ChEBI" id="CHEBI:30616"/>
    </ligand>
</feature>
<feature type="binding site" evidence="1">
    <location>
        <position position="134"/>
    </location>
    <ligand>
        <name>(R)-lipoate</name>
        <dbReference type="ChEBI" id="CHEBI:83088"/>
    </ligand>
</feature>
<feature type="binding site" evidence="1">
    <location>
        <position position="134"/>
    </location>
    <ligand>
        <name>ATP</name>
        <dbReference type="ChEBI" id="CHEBI:30616"/>
    </ligand>
</feature>
<keyword id="KW-0067">ATP-binding</keyword>
<keyword id="KW-0963">Cytoplasm</keyword>
<keyword id="KW-0436">Ligase</keyword>
<keyword id="KW-0547">Nucleotide-binding</keyword>
<keyword id="KW-1185">Reference proteome</keyword>
<evidence type="ECO:0000255" key="1">
    <source>
        <dbReference type="HAMAP-Rule" id="MF_01602"/>
    </source>
</evidence>
<evidence type="ECO:0000255" key="2">
    <source>
        <dbReference type="PROSITE-ProRule" id="PRU01067"/>
    </source>
</evidence>
<dbReference type="EC" id="6.3.1.20" evidence="1"/>
<dbReference type="EMBL" id="AE003852">
    <property type="protein sequence ID" value="AAF94546.1"/>
    <property type="molecule type" value="Genomic_DNA"/>
</dbReference>
<dbReference type="PIR" id="E82204">
    <property type="entry name" value="E82204"/>
</dbReference>
<dbReference type="RefSeq" id="NP_231032.1">
    <property type="nucleotide sequence ID" value="NC_002505.1"/>
</dbReference>
<dbReference type="RefSeq" id="WP_000169395.1">
    <property type="nucleotide sequence ID" value="NZ_LT906614.1"/>
</dbReference>
<dbReference type="SMR" id="Q9KS71"/>
<dbReference type="STRING" id="243277.VC_1388"/>
<dbReference type="DNASU" id="2614020"/>
<dbReference type="EnsemblBacteria" id="AAF94546">
    <property type="protein sequence ID" value="AAF94546"/>
    <property type="gene ID" value="VC_1388"/>
</dbReference>
<dbReference type="KEGG" id="vch:VC_1388"/>
<dbReference type="PATRIC" id="fig|243277.26.peg.1319"/>
<dbReference type="eggNOG" id="COG0095">
    <property type="taxonomic scope" value="Bacteria"/>
</dbReference>
<dbReference type="HOGENOM" id="CLU_022986_0_1_6"/>
<dbReference type="UniPathway" id="UPA00537">
    <property type="reaction ID" value="UER00594"/>
</dbReference>
<dbReference type="UniPathway" id="UPA00537">
    <property type="reaction ID" value="UER00595"/>
</dbReference>
<dbReference type="Proteomes" id="UP000000584">
    <property type="component" value="Chromosome 1"/>
</dbReference>
<dbReference type="GO" id="GO:0005737">
    <property type="term" value="C:cytoplasm"/>
    <property type="evidence" value="ECO:0000318"/>
    <property type="project" value="GO_Central"/>
</dbReference>
<dbReference type="GO" id="GO:0005829">
    <property type="term" value="C:cytosol"/>
    <property type="evidence" value="ECO:0000318"/>
    <property type="project" value="GO_Central"/>
</dbReference>
<dbReference type="GO" id="GO:0005524">
    <property type="term" value="F:ATP binding"/>
    <property type="evidence" value="ECO:0007669"/>
    <property type="project" value="UniProtKB-KW"/>
</dbReference>
<dbReference type="GO" id="GO:0016979">
    <property type="term" value="F:lipoate-protein ligase activity"/>
    <property type="evidence" value="ECO:0000318"/>
    <property type="project" value="GO_Central"/>
</dbReference>
<dbReference type="GO" id="GO:0017118">
    <property type="term" value="F:lipoyltransferase activity"/>
    <property type="evidence" value="ECO:0000318"/>
    <property type="project" value="GO_Central"/>
</dbReference>
<dbReference type="GO" id="GO:0036211">
    <property type="term" value="P:protein modification process"/>
    <property type="evidence" value="ECO:0007669"/>
    <property type="project" value="InterPro"/>
</dbReference>
<dbReference type="CDD" id="cd16443">
    <property type="entry name" value="LplA"/>
    <property type="match status" value="1"/>
</dbReference>
<dbReference type="FunFam" id="3.30.930.10:FF:000024">
    <property type="entry name" value="Lipoate-protein ligase A"/>
    <property type="match status" value="1"/>
</dbReference>
<dbReference type="Gene3D" id="3.30.930.10">
    <property type="entry name" value="Bira Bifunctional Protein, Domain 2"/>
    <property type="match status" value="1"/>
</dbReference>
<dbReference type="Gene3D" id="3.30.390.50">
    <property type="entry name" value="CO dehydrogenase flavoprotein, C-terminal domain"/>
    <property type="match status" value="1"/>
</dbReference>
<dbReference type="HAMAP" id="MF_01602">
    <property type="entry name" value="LplA"/>
    <property type="match status" value="1"/>
</dbReference>
<dbReference type="InterPro" id="IPR045864">
    <property type="entry name" value="aa-tRNA-synth_II/BPL/LPL"/>
</dbReference>
<dbReference type="InterPro" id="IPR004143">
    <property type="entry name" value="BPL_LPL_catalytic"/>
</dbReference>
<dbReference type="InterPro" id="IPR023741">
    <property type="entry name" value="Lipoate_ligase_A"/>
</dbReference>
<dbReference type="InterPro" id="IPR019491">
    <property type="entry name" value="Lipoate_protein_ligase_C"/>
</dbReference>
<dbReference type="InterPro" id="IPR004562">
    <property type="entry name" value="LipoylTrfase_LipoateP_Ligase"/>
</dbReference>
<dbReference type="NCBIfam" id="TIGR00545">
    <property type="entry name" value="lipoyltrans"/>
    <property type="match status" value="1"/>
</dbReference>
<dbReference type="PANTHER" id="PTHR12561">
    <property type="entry name" value="LIPOATE-PROTEIN LIGASE"/>
    <property type="match status" value="1"/>
</dbReference>
<dbReference type="PANTHER" id="PTHR12561:SF3">
    <property type="entry name" value="LIPOYLTRANSFERASE 1, MITOCHONDRIAL"/>
    <property type="match status" value="1"/>
</dbReference>
<dbReference type="Pfam" id="PF10437">
    <property type="entry name" value="Lip_prot_lig_C"/>
    <property type="match status" value="1"/>
</dbReference>
<dbReference type="Pfam" id="PF21948">
    <property type="entry name" value="LplA-B_cat"/>
    <property type="match status" value="1"/>
</dbReference>
<dbReference type="SUPFAM" id="SSF55681">
    <property type="entry name" value="Class II aaRS and biotin synthetases"/>
    <property type="match status" value="1"/>
</dbReference>
<dbReference type="SUPFAM" id="SSF82649">
    <property type="entry name" value="SufE/NifU"/>
    <property type="match status" value="1"/>
</dbReference>
<dbReference type="PROSITE" id="PS51733">
    <property type="entry name" value="BPL_LPL_CATALYTIC"/>
    <property type="match status" value="1"/>
</dbReference>
<comment type="function">
    <text evidence="1">Catalyzes both the ATP-dependent activation of exogenously supplied lipoate to lipoyl-AMP and the transfer of the activated lipoyl onto the lipoyl domains of lipoate-dependent enzymes.</text>
</comment>
<comment type="catalytic activity">
    <reaction evidence="1">
        <text>L-lysyl-[lipoyl-carrier protein] + (R)-lipoate + ATP = N(6)-[(R)-lipoyl]-L-lysyl-[lipoyl-carrier protein] + AMP + diphosphate + H(+)</text>
        <dbReference type="Rhea" id="RHEA:49288"/>
        <dbReference type="Rhea" id="RHEA-COMP:10500"/>
        <dbReference type="Rhea" id="RHEA-COMP:10502"/>
        <dbReference type="ChEBI" id="CHEBI:15378"/>
        <dbReference type="ChEBI" id="CHEBI:29969"/>
        <dbReference type="ChEBI" id="CHEBI:30616"/>
        <dbReference type="ChEBI" id="CHEBI:33019"/>
        <dbReference type="ChEBI" id="CHEBI:83088"/>
        <dbReference type="ChEBI" id="CHEBI:83099"/>
        <dbReference type="ChEBI" id="CHEBI:456215"/>
        <dbReference type="EC" id="6.3.1.20"/>
    </reaction>
</comment>
<comment type="pathway">
    <text evidence="1">Protein modification; protein lipoylation via exogenous pathway; protein N(6)-(lipoyl)lysine from lipoate: step 1/2.</text>
</comment>
<comment type="pathway">
    <text evidence="1">Protein modification; protein lipoylation via exogenous pathway; protein N(6)-(lipoyl)lysine from lipoate: step 2/2.</text>
</comment>
<comment type="subunit">
    <text evidence="1">Monomer.</text>
</comment>
<comment type="subcellular location">
    <subcellularLocation>
        <location evidence="1">Cytoplasm</location>
    </subcellularLocation>
</comment>
<comment type="miscellaneous">
    <text evidence="1">In the transfer reaction, the free carboxyl group of lipoic acid is attached via an amide linkage to the epsilon-amino group of a specific lysine residue of lipoyl domains of lipoate-dependent enzymes.</text>
</comment>
<comment type="similarity">
    <text evidence="1">Belongs to the LplA family.</text>
</comment>
<reference key="1">
    <citation type="journal article" date="2000" name="Nature">
        <title>DNA sequence of both chromosomes of the cholera pathogen Vibrio cholerae.</title>
        <authorList>
            <person name="Heidelberg J.F."/>
            <person name="Eisen J.A."/>
            <person name="Nelson W.C."/>
            <person name="Clayton R.A."/>
            <person name="Gwinn M.L."/>
            <person name="Dodson R.J."/>
            <person name="Haft D.H."/>
            <person name="Hickey E.K."/>
            <person name="Peterson J.D."/>
            <person name="Umayam L.A."/>
            <person name="Gill S.R."/>
            <person name="Nelson K.E."/>
            <person name="Read T.D."/>
            <person name="Tettelin H."/>
            <person name="Richardson D.L."/>
            <person name="Ermolaeva M.D."/>
            <person name="Vamathevan J.J."/>
            <person name="Bass S."/>
            <person name="Qin H."/>
            <person name="Dragoi I."/>
            <person name="Sellers P."/>
            <person name="McDonald L.A."/>
            <person name="Utterback T.R."/>
            <person name="Fleischmann R.D."/>
            <person name="Nierman W.C."/>
            <person name="White O."/>
            <person name="Salzberg S.L."/>
            <person name="Smith H.O."/>
            <person name="Colwell R.R."/>
            <person name="Mekalanos J.J."/>
            <person name="Venter J.C."/>
            <person name="Fraser C.M."/>
        </authorList>
    </citation>
    <scope>NUCLEOTIDE SEQUENCE [LARGE SCALE GENOMIC DNA]</scope>
    <source>
        <strain>ATCC 39315 / El Tor Inaba N16961</strain>
    </source>
</reference>
<accession>Q9KS71</accession>
<organism>
    <name type="scientific">Vibrio cholerae serotype O1 (strain ATCC 39315 / El Tor Inaba N16961)</name>
    <dbReference type="NCBI Taxonomy" id="243277"/>
    <lineage>
        <taxon>Bacteria</taxon>
        <taxon>Pseudomonadati</taxon>
        <taxon>Pseudomonadota</taxon>
        <taxon>Gammaproteobacteria</taxon>
        <taxon>Vibrionales</taxon>
        <taxon>Vibrionaceae</taxon>
        <taxon>Vibrio</taxon>
    </lineage>
</organism>
<proteinExistence type="inferred from homology"/>
<sequence length="338" mass="38797">MTKTRILLSDSTDPWFNLAVEDTIFRSMPADQRVLFLWRNADTVVIGRAQNPWRECKTDRMEQDKVKLARRQTGGGAVFHDLGNTNFTFMAGKPEYDKEVSTKIVLAGLQKLGIHGVANGRNDLVLEDEQGIRKFSGSAYRETLDRGFHHGTLLLSADLNRLADYLNPDLKKLQAKGITSVKSRVINLNTVKADIEHQQVCEAIMQAYCEHYQQQVEPELISPQSFFDLPGFEQKFAQQSSWDWNFGQTPPFTHHMDERFSWGGVEVYLEVERGTIVQATIFSDMLDPYPMEQLALRLSGLTYNKTALEPCLAQLMQELPQYQLPLEEFQRWFIDQID</sequence>
<name>LPLA_VIBCH</name>
<protein>
    <recommendedName>
        <fullName evidence="1">Lipoate-protein ligase A</fullName>
        <ecNumber evidence="1">6.3.1.20</ecNumber>
    </recommendedName>
    <alternativeName>
        <fullName evidence="1">Lipoate--protein ligase</fullName>
    </alternativeName>
</protein>